<organism>
    <name type="scientific">Human herpesvirus 1 (strain F)</name>
    <name type="common">HHV-1</name>
    <name type="synonym">Human herpes simplex virus 1</name>
    <dbReference type="NCBI Taxonomy" id="10304"/>
    <lineage>
        <taxon>Viruses</taxon>
        <taxon>Duplodnaviria</taxon>
        <taxon>Heunggongvirae</taxon>
        <taxon>Peploviricota</taxon>
        <taxon>Herviviricetes</taxon>
        <taxon>Herpesvirales</taxon>
        <taxon>Orthoherpesviridae</taxon>
        <taxon>Alphaherpesvirinae</taxon>
        <taxon>Simplexvirus</taxon>
        <taxon>Simplexvirus humanalpha1</taxon>
        <taxon>Human herpesvirus 1</taxon>
    </lineage>
</organism>
<reference key="1">
    <citation type="journal article" date="1989" name="Virology">
        <title>Sequence of the latency-related gene of herpes simplex virus type 1.</title>
        <authorList>
            <person name="Wechsler S.L."/>
            <person name="Nesburn A.B."/>
            <person name="Zwaagstra J."/>
            <person name="Ghiasi H."/>
        </authorList>
    </citation>
    <scope>NUCLEOTIDE SEQUENCE [GENOMIC DNA]</scope>
</reference>
<protein>
    <recommendedName>
        <fullName>Latency-related protein 1</fullName>
    </recommendedName>
</protein>
<dbReference type="EMBL" id="J04323">
    <property type="protein sequence ID" value="AAA45799.1"/>
    <property type="molecule type" value="Genomic_DNA"/>
</dbReference>
<dbReference type="PIR" id="A33337">
    <property type="entry name" value="WMBEL1"/>
</dbReference>
<keyword id="KW-0677">Repeat</keyword>
<proteinExistence type="predicted"/>
<accession>P17588</accession>
<feature type="chain" id="PRO_0000116283" description="Latency-related protein 1">
    <location>
        <begin position="1"/>
        <end position="340"/>
    </location>
</feature>
<feature type="repeat" description="1">
    <location>
        <begin position="27"/>
        <end position="43"/>
    </location>
</feature>
<feature type="repeat" description="2">
    <location>
        <begin position="59"/>
        <end position="75"/>
    </location>
</feature>
<feature type="region of interest" description="Disordered" evidence="1">
    <location>
        <begin position="13"/>
        <end position="96"/>
    </location>
</feature>
<feature type="region of interest" description="2 X 17 AA repeats">
    <location>
        <begin position="27"/>
        <end position="75"/>
    </location>
</feature>
<feature type="region of interest" description="Disordered" evidence="1">
    <location>
        <begin position="254"/>
        <end position="340"/>
    </location>
</feature>
<feature type="compositionally biased region" description="Pro residues" evidence="1">
    <location>
        <begin position="35"/>
        <end position="73"/>
    </location>
</feature>
<feature type="compositionally biased region" description="Gly residues" evidence="1">
    <location>
        <begin position="287"/>
        <end position="307"/>
    </location>
</feature>
<feature type="compositionally biased region" description="Basic residues" evidence="1">
    <location>
        <begin position="308"/>
        <end position="326"/>
    </location>
</feature>
<sequence>MLSGIGGQAARAAALWLTPEPAQHGTPTPTHPHSHAPPLPRTPTPSHPHSRAPPLPRAPTPTHPHSHAPPLPRTPEIHPTQTGKRYKSKPLFPNRQQKSPEFFIRANTKDPLVCGARVFHFSPPRHGLAGVVGAARDHPAPDPPLPTNTGGVPYCFPSSRVDAPCSPDHGCRDRRLRKSRAPTRVPWSNSMFPTGVIQRLFHSDAGAVGYSGGITWLPAVSGSRVRRLQPGTAARSRVAMFPVWSTRTTLRVARLPGTLPRPPRPRSSAGAEGGFLLSPSQGTDGPARGGGSGGGRGPGGGRGGPRGSRGRGGRGRGGRGGGRRGRQGGPGPTLAAPPRP</sequence>
<evidence type="ECO:0000256" key="1">
    <source>
        <dbReference type="SAM" id="MobiDB-lite"/>
    </source>
</evidence>
<organismHost>
    <name type="scientific">Homo sapiens</name>
    <name type="common">Human</name>
    <dbReference type="NCBI Taxonomy" id="9606"/>
</organismHost>
<name>LRP1_HHV1F</name>